<protein>
    <recommendedName>
        <fullName evidence="1">4-hydroxybenzoate octaprenyltransferase</fullName>
        <ecNumber evidence="1">2.5.1.39</ecNumber>
    </recommendedName>
    <alternativeName>
        <fullName evidence="1">4-HB polyprenyltransferase</fullName>
    </alternativeName>
</protein>
<proteinExistence type="inferred from homology"/>
<organism>
    <name type="scientific">Pseudomonas syringae pv. syringae (strain B728a)</name>
    <dbReference type="NCBI Taxonomy" id="205918"/>
    <lineage>
        <taxon>Bacteria</taxon>
        <taxon>Pseudomonadati</taxon>
        <taxon>Pseudomonadota</taxon>
        <taxon>Gammaproteobacteria</taxon>
        <taxon>Pseudomonadales</taxon>
        <taxon>Pseudomonadaceae</taxon>
        <taxon>Pseudomonas</taxon>
        <taxon>Pseudomonas syringae</taxon>
    </lineage>
</organism>
<reference key="1">
    <citation type="journal article" date="2005" name="Proc. Natl. Acad. Sci. U.S.A.">
        <title>Comparison of the complete genome sequences of Pseudomonas syringae pv. syringae B728a and pv. tomato DC3000.</title>
        <authorList>
            <person name="Feil H."/>
            <person name="Feil W.S."/>
            <person name="Chain P."/>
            <person name="Larimer F."/>
            <person name="Dibartolo G."/>
            <person name="Copeland A."/>
            <person name="Lykidis A."/>
            <person name="Trong S."/>
            <person name="Nolan M."/>
            <person name="Goltsman E."/>
            <person name="Thiel J."/>
            <person name="Malfatti S."/>
            <person name="Loper J.E."/>
            <person name="Lapidus A."/>
            <person name="Detter J.C."/>
            <person name="Land M."/>
            <person name="Richardson P.M."/>
            <person name="Kyrpides N.C."/>
            <person name="Ivanova N."/>
            <person name="Lindow S.E."/>
        </authorList>
    </citation>
    <scope>NUCLEOTIDE SEQUENCE [LARGE SCALE GENOMIC DNA]</scope>
    <source>
        <strain>B728a</strain>
    </source>
</reference>
<accession>Q4ZLB4</accession>
<evidence type="ECO:0000255" key="1">
    <source>
        <dbReference type="HAMAP-Rule" id="MF_01635"/>
    </source>
</evidence>
<feature type="chain" id="PRO_0000262824" description="4-hydroxybenzoate octaprenyltransferase">
    <location>
        <begin position="1"/>
        <end position="296"/>
    </location>
</feature>
<feature type="transmembrane region" description="Helical" evidence="1">
    <location>
        <begin position="29"/>
        <end position="49"/>
    </location>
</feature>
<feature type="transmembrane region" description="Helical" evidence="1">
    <location>
        <begin position="52"/>
        <end position="72"/>
    </location>
</feature>
<feature type="transmembrane region" description="Helical" evidence="1">
    <location>
        <begin position="102"/>
        <end position="122"/>
    </location>
</feature>
<feature type="transmembrane region" description="Helical" evidence="1">
    <location>
        <begin position="146"/>
        <end position="166"/>
    </location>
</feature>
<feature type="transmembrane region" description="Helical" evidence="1">
    <location>
        <begin position="169"/>
        <end position="189"/>
    </location>
</feature>
<feature type="transmembrane region" description="Helical" evidence="1">
    <location>
        <begin position="219"/>
        <end position="239"/>
    </location>
</feature>
<feature type="transmembrane region" description="Helical" evidence="1">
    <location>
        <begin position="241"/>
        <end position="261"/>
    </location>
</feature>
<feature type="transmembrane region" description="Helical" evidence="1">
    <location>
        <begin position="275"/>
        <end position="295"/>
    </location>
</feature>
<keyword id="KW-0997">Cell inner membrane</keyword>
<keyword id="KW-1003">Cell membrane</keyword>
<keyword id="KW-0460">Magnesium</keyword>
<keyword id="KW-0472">Membrane</keyword>
<keyword id="KW-0808">Transferase</keyword>
<keyword id="KW-0812">Transmembrane</keyword>
<keyword id="KW-1133">Transmembrane helix</keyword>
<keyword id="KW-0831">Ubiquinone biosynthesis</keyword>
<comment type="function">
    <text evidence="1">Catalyzes the prenylation of para-hydroxybenzoate (PHB) with an all-trans polyprenyl group. Mediates the second step in the final reaction sequence of ubiquinone-8 (UQ-8) biosynthesis, which is the condensation of the polyisoprenoid side chain with PHB, generating the first membrane-bound Q intermediate 3-octaprenyl-4-hydroxybenzoate.</text>
</comment>
<comment type="catalytic activity">
    <reaction evidence="1">
        <text>all-trans-octaprenyl diphosphate + 4-hydroxybenzoate = 4-hydroxy-3-(all-trans-octaprenyl)benzoate + diphosphate</text>
        <dbReference type="Rhea" id="RHEA:27782"/>
        <dbReference type="ChEBI" id="CHEBI:1617"/>
        <dbReference type="ChEBI" id="CHEBI:17879"/>
        <dbReference type="ChEBI" id="CHEBI:33019"/>
        <dbReference type="ChEBI" id="CHEBI:57711"/>
        <dbReference type="EC" id="2.5.1.39"/>
    </reaction>
</comment>
<comment type="cofactor">
    <cofactor evidence="1">
        <name>Mg(2+)</name>
        <dbReference type="ChEBI" id="CHEBI:18420"/>
    </cofactor>
</comment>
<comment type="pathway">
    <text evidence="1">Cofactor biosynthesis; ubiquinone biosynthesis.</text>
</comment>
<comment type="subcellular location">
    <subcellularLocation>
        <location evidence="1">Cell inner membrane</location>
        <topology evidence="1">Multi-pass membrane protein</topology>
    </subcellularLocation>
</comment>
<comment type="similarity">
    <text evidence="1">Belongs to the UbiA prenyltransferase family.</text>
</comment>
<gene>
    <name evidence="1" type="primary">ubiA</name>
    <name type="ordered locus">Psyr_5031</name>
</gene>
<dbReference type="EC" id="2.5.1.39" evidence="1"/>
<dbReference type="EMBL" id="CP000075">
    <property type="protein sequence ID" value="AAY40058.1"/>
    <property type="molecule type" value="Genomic_DNA"/>
</dbReference>
<dbReference type="RefSeq" id="WP_003401244.1">
    <property type="nucleotide sequence ID" value="NC_007005.1"/>
</dbReference>
<dbReference type="RefSeq" id="YP_238096.1">
    <property type="nucleotide sequence ID" value="NC_007005.1"/>
</dbReference>
<dbReference type="SMR" id="Q4ZLB4"/>
<dbReference type="STRING" id="205918.Psyr_5031"/>
<dbReference type="KEGG" id="psb:Psyr_5031"/>
<dbReference type="PATRIC" id="fig|205918.7.peg.5190"/>
<dbReference type="eggNOG" id="COG0382">
    <property type="taxonomic scope" value="Bacteria"/>
</dbReference>
<dbReference type="HOGENOM" id="CLU_034879_1_0_6"/>
<dbReference type="OrthoDB" id="9782418at2"/>
<dbReference type="UniPathway" id="UPA00232"/>
<dbReference type="Proteomes" id="UP000000426">
    <property type="component" value="Chromosome"/>
</dbReference>
<dbReference type="GO" id="GO:0005886">
    <property type="term" value="C:plasma membrane"/>
    <property type="evidence" value="ECO:0007669"/>
    <property type="project" value="UniProtKB-SubCell"/>
</dbReference>
<dbReference type="GO" id="GO:0008412">
    <property type="term" value="F:4-hydroxybenzoate polyprenyltransferase activity"/>
    <property type="evidence" value="ECO:0007669"/>
    <property type="project" value="UniProtKB-UniRule"/>
</dbReference>
<dbReference type="GO" id="GO:0006744">
    <property type="term" value="P:ubiquinone biosynthetic process"/>
    <property type="evidence" value="ECO:0007669"/>
    <property type="project" value="UniProtKB-UniRule"/>
</dbReference>
<dbReference type="CDD" id="cd13959">
    <property type="entry name" value="PT_UbiA_COQ2"/>
    <property type="match status" value="1"/>
</dbReference>
<dbReference type="FunFam" id="1.10.357.140:FF:000002">
    <property type="entry name" value="4-hydroxybenzoate octaprenyltransferase"/>
    <property type="match status" value="1"/>
</dbReference>
<dbReference type="FunFam" id="1.20.120.1780:FF:000001">
    <property type="entry name" value="4-hydroxybenzoate octaprenyltransferase"/>
    <property type="match status" value="1"/>
</dbReference>
<dbReference type="Gene3D" id="1.10.357.140">
    <property type="entry name" value="UbiA prenyltransferase"/>
    <property type="match status" value="1"/>
</dbReference>
<dbReference type="Gene3D" id="1.20.120.1780">
    <property type="entry name" value="UbiA prenyltransferase"/>
    <property type="match status" value="1"/>
</dbReference>
<dbReference type="HAMAP" id="MF_01635">
    <property type="entry name" value="UbiA"/>
    <property type="match status" value="1"/>
</dbReference>
<dbReference type="InterPro" id="IPR006370">
    <property type="entry name" value="HB_polyprenyltransferase-like"/>
</dbReference>
<dbReference type="InterPro" id="IPR039653">
    <property type="entry name" value="Prenyltransferase"/>
</dbReference>
<dbReference type="InterPro" id="IPR000537">
    <property type="entry name" value="UbiA_prenyltransferase"/>
</dbReference>
<dbReference type="InterPro" id="IPR044878">
    <property type="entry name" value="UbiA_sf"/>
</dbReference>
<dbReference type="NCBIfam" id="TIGR01474">
    <property type="entry name" value="ubiA_proteo"/>
    <property type="match status" value="1"/>
</dbReference>
<dbReference type="PANTHER" id="PTHR11048:SF28">
    <property type="entry name" value="4-HYDROXYBENZOATE POLYPRENYLTRANSFERASE, MITOCHONDRIAL"/>
    <property type="match status" value="1"/>
</dbReference>
<dbReference type="PANTHER" id="PTHR11048">
    <property type="entry name" value="PRENYLTRANSFERASES"/>
    <property type="match status" value="1"/>
</dbReference>
<dbReference type="Pfam" id="PF01040">
    <property type="entry name" value="UbiA"/>
    <property type="match status" value="1"/>
</dbReference>
<sequence length="296" mass="32808">MYLSLLKSLNRLSPRAWDFIQLTRIDKPIGVYLLLWPTLWAVWIAGKGAPSLQTVCIFVLGVFLMRAAGCVINDFADRKVDGHVKRTEQRPLVSGKVSPREALVLFAVLVGLSFVLVLFTNAATIWLSFGGLALAASYPFMKRYTYYPQVVLGAAFSWGMPMAFTAETGELPAAAWLLYIANLLWTVGYDTYYAMVDRDDDLKIGVKSTAVLFGDADRVIILTLQGLALGCLMLAGARFELGACFYIGLLAAAGCFAWEFWSTRERERDACFKAFLHNHWAGLAIFLGIVADYAVR</sequence>
<name>UBIA_PSEU2</name>